<reference key="1">
    <citation type="submission" date="2007-08" db="EMBL/GenBank/DDBJ databases">
        <title>Complete sequence of Roseiflexus castenholzii DSM 13941.</title>
        <authorList>
            <consortium name="US DOE Joint Genome Institute"/>
            <person name="Copeland A."/>
            <person name="Lucas S."/>
            <person name="Lapidus A."/>
            <person name="Barry K."/>
            <person name="Glavina del Rio T."/>
            <person name="Dalin E."/>
            <person name="Tice H."/>
            <person name="Pitluck S."/>
            <person name="Thompson L.S."/>
            <person name="Brettin T."/>
            <person name="Bruce D."/>
            <person name="Detter J.C."/>
            <person name="Han C."/>
            <person name="Tapia R."/>
            <person name="Schmutz J."/>
            <person name="Larimer F."/>
            <person name="Land M."/>
            <person name="Hauser L."/>
            <person name="Kyrpides N."/>
            <person name="Mikhailova N."/>
            <person name="Bryant D.A."/>
            <person name="Hanada S."/>
            <person name="Tsukatani Y."/>
            <person name="Richardson P."/>
        </authorList>
    </citation>
    <scope>NUCLEOTIDE SEQUENCE [LARGE SCALE GENOMIC DNA]</scope>
    <source>
        <strain>DSM 13941 / HLO8</strain>
    </source>
</reference>
<protein>
    <recommendedName>
        <fullName evidence="1">Elongation factor P</fullName>
        <shortName evidence="1">EF-P</shortName>
    </recommendedName>
</protein>
<organism>
    <name type="scientific">Roseiflexus castenholzii (strain DSM 13941 / HLO8)</name>
    <dbReference type="NCBI Taxonomy" id="383372"/>
    <lineage>
        <taxon>Bacteria</taxon>
        <taxon>Bacillati</taxon>
        <taxon>Chloroflexota</taxon>
        <taxon>Chloroflexia</taxon>
        <taxon>Chloroflexales</taxon>
        <taxon>Roseiflexineae</taxon>
        <taxon>Roseiflexaceae</taxon>
        <taxon>Roseiflexus</taxon>
    </lineage>
</organism>
<accession>A7NJE1</accession>
<dbReference type="EMBL" id="CP000804">
    <property type="protein sequence ID" value="ABU57611.1"/>
    <property type="molecule type" value="Genomic_DNA"/>
</dbReference>
<dbReference type="RefSeq" id="WP_012120039.1">
    <property type="nucleotide sequence ID" value="NC_009767.1"/>
</dbReference>
<dbReference type="SMR" id="A7NJE1"/>
<dbReference type="STRING" id="383372.Rcas_1518"/>
<dbReference type="KEGG" id="rca:Rcas_1518"/>
<dbReference type="eggNOG" id="COG0231">
    <property type="taxonomic scope" value="Bacteria"/>
</dbReference>
<dbReference type="HOGENOM" id="CLU_074944_0_1_0"/>
<dbReference type="OrthoDB" id="9801844at2"/>
<dbReference type="UniPathway" id="UPA00345"/>
<dbReference type="Proteomes" id="UP000000263">
    <property type="component" value="Chromosome"/>
</dbReference>
<dbReference type="GO" id="GO:0005737">
    <property type="term" value="C:cytoplasm"/>
    <property type="evidence" value="ECO:0007669"/>
    <property type="project" value="UniProtKB-SubCell"/>
</dbReference>
<dbReference type="GO" id="GO:0003746">
    <property type="term" value="F:translation elongation factor activity"/>
    <property type="evidence" value="ECO:0007669"/>
    <property type="project" value="UniProtKB-UniRule"/>
</dbReference>
<dbReference type="GO" id="GO:0043043">
    <property type="term" value="P:peptide biosynthetic process"/>
    <property type="evidence" value="ECO:0007669"/>
    <property type="project" value="InterPro"/>
</dbReference>
<dbReference type="CDD" id="cd04470">
    <property type="entry name" value="S1_EF-P_repeat_1"/>
    <property type="match status" value="1"/>
</dbReference>
<dbReference type="CDD" id="cd05794">
    <property type="entry name" value="S1_EF-P_repeat_2"/>
    <property type="match status" value="1"/>
</dbReference>
<dbReference type="FunFam" id="2.30.30.30:FF:000003">
    <property type="entry name" value="Elongation factor P"/>
    <property type="match status" value="1"/>
</dbReference>
<dbReference type="FunFam" id="2.40.50.140:FF:000004">
    <property type="entry name" value="Elongation factor P"/>
    <property type="match status" value="1"/>
</dbReference>
<dbReference type="FunFam" id="2.40.50.140:FF:000009">
    <property type="entry name" value="Elongation factor P"/>
    <property type="match status" value="1"/>
</dbReference>
<dbReference type="Gene3D" id="2.30.30.30">
    <property type="match status" value="1"/>
</dbReference>
<dbReference type="Gene3D" id="2.40.50.140">
    <property type="entry name" value="Nucleic acid-binding proteins"/>
    <property type="match status" value="2"/>
</dbReference>
<dbReference type="HAMAP" id="MF_00141">
    <property type="entry name" value="EF_P"/>
    <property type="match status" value="1"/>
</dbReference>
<dbReference type="InterPro" id="IPR015365">
    <property type="entry name" value="Elong-fact-P_C"/>
</dbReference>
<dbReference type="InterPro" id="IPR012340">
    <property type="entry name" value="NA-bd_OB-fold"/>
</dbReference>
<dbReference type="InterPro" id="IPR014722">
    <property type="entry name" value="Rib_uL2_dom2"/>
</dbReference>
<dbReference type="InterPro" id="IPR020599">
    <property type="entry name" value="Transl_elong_fac_P/YeiP"/>
</dbReference>
<dbReference type="InterPro" id="IPR013185">
    <property type="entry name" value="Transl_elong_KOW-like"/>
</dbReference>
<dbReference type="InterPro" id="IPR001059">
    <property type="entry name" value="Transl_elong_P/YeiP_cen"/>
</dbReference>
<dbReference type="InterPro" id="IPR013852">
    <property type="entry name" value="Transl_elong_P/YeiP_CS"/>
</dbReference>
<dbReference type="InterPro" id="IPR011768">
    <property type="entry name" value="Transl_elongation_fac_P"/>
</dbReference>
<dbReference type="InterPro" id="IPR008991">
    <property type="entry name" value="Translation_prot_SH3-like_sf"/>
</dbReference>
<dbReference type="NCBIfam" id="TIGR00038">
    <property type="entry name" value="efp"/>
    <property type="match status" value="1"/>
</dbReference>
<dbReference type="NCBIfam" id="NF001810">
    <property type="entry name" value="PRK00529.1"/>
    <property type="match status" value="1"/>
</dbReference>
<dbReference type="PANTHER" id="PTHR30053">
    <property type="entry name" value="ELONGATION FACTOR P"/>
    <property type="match status" value="1"/>
</dbReference>
<dbReference type="PANTHER" id="PTHR30053:SF12">
    <property type="entry name" value="ELONGATION FACTOR P (EF-P) FAMILY PROTEIN"/>
    <property type="match status" value="1"/>
</dbReference>
<dbReference type="Pfam" id="PF01132">
    <property type="entry name" value="EFP"/>
    <property type="match status" value="1"/>
</dbReference>
<dbReference type="Pfam" id="PF08207">
    <property type="entry name" value="EFP_N"/>
    <property type="match status" value="1"/>
</dbReference>
<dbReference type="Pfam" id="PF09285">
    <property type="entry name" value="Elong-fact-P_C"/>
    <property type="match status" value="1"/>
</dbReference>
<dbReference type="PIRSF" id="PIRSF005901">
    <property type="entry name" value="EF-P"/>
    <property type="match status" value="1"/>
</dbReference>
<dbReference type="SMART" id="SM01185">
    <property type="entry name" value="EFP"/>
    <property type="match status" value="1"/>
</dbReference>
<dbReference type="SMART" id="SM00841">
    <property type="entry name" value="Elong-fact-P_C"/>
    <property type="match status" value="1"/>
</dbReference>
<dbReference type="SUPFAM" id="SSF50249">
    <property type="entry name" value="Nucleic acid-binding proteins"/>
    <property type="match status" value="2"/>
</dbReference>
<dbReference type="SUPFAM" id="SSF50104">
    <property type="entry name" value="Translation proteins SH3-like domain"/>
    <property type="match status" value="1"/>
</dbReference>
<dbReference type="PROSITE" id="PS01275">
    <property type="entry name" value="EFP"/>
    <property type="match status" value="1"/>
</dbReference>
<gene>
    <name evidence="1" type="primary">efp</name>
    <name type="ordered locus">Rcas_1518</name>
</gene>
<proteinExistence type="inferred from homology"/>
<sequence>MATTSDLRTNMIIRHNGQLHRVMEFYHHAPGNWRAMVIMKLKNIETGKTIEERVRAGSEIEIVRVEKRPMQFLYREGDIYHFMDTETFEQIEVAEDLIGEPAKFLKENEMADILFYDDNKILGVEPPLFVTLQVTEASVAVRGDTATNVNKQVTLETGAVISVPAFVNQGDYVRVDTRTGEYIERIK</sequence>
<name>EFP_ROSCS</name>
<comment type="function">
    <text evidence="1">Involved in peptide bond synthesis. Stimulates efficient translation and peptide-bond synthesis on native or reconstituted 70S ribosomes in vitro. Probably functions indirectly by altering the affinity of the ribosome for aminoacyl-tRNA, thus increasing their reactivity as acceptors for peptidyl transferase.</text>
</comment>
<comment type="pathway">
    <text evidence="1">Protein biosynthesis; polypeptide chain elongation.</text>
</comment>
<comment type="subcellular location">
    <subcellularLocation>
        <location evidence="1">Cytoplasm</location>
    </subcellularLocation>
</comment>
<comment type="similarity">
    <text evidence="1">Belongs to the elongation factor P family.</text>
</comment>
<evidence type="ECO:0000255" key="1">
    <source>
        <dbReference type="HAMAP-Rule" id="MF_00141"/>
    </source>
</evidence>
<keyword id="KW-0963">Cytoplasm</keyword>
<keyword id="KW-0251">Elongation factor</keyword>
<keyword id="KW-0648">Protein biosynthesis</keyword>
<keyword id="KW-1185">Reference proteome</keyword>
<feature type="chain" id="PRO_1000076528" description="Elongation factor P">
    <location>
        <begin position="1"/>
        <end position="187"/>
    </location>
</feature>